<accession>Q2FYI5</accession>
<comment type="function">
    <text evidence="1">Divisome component that associates with the complex late in its assembly, after the Z-ring is formed, and is dependent on DivIC and PBP2B for its recruitment to the divisome. Together with EzrA, is a key component of the system that regulates PBP1 localization during cell cycle progression. Its main role could be the removal of PBP1 from the cell pole after pole maturation is completed. Also contributes to the recruitment of PBP1 to the division complex. Not essential for septum formation.</text>
</comment>
<comment type="subunit">
    <text evidence="1">Forms polymers through the coiled coil domains. Interacts with PBP1, MreC and EzrA.</text>
</comment>
<comment type="subcellular location">
    <subcellularLocation>
        <location evidence="1">Cytoplasm</location>
    </subcellularLocation>
    <text evidence="1">Shuttles between the lateral wall and the division site in a cell cycle-dependent manner.</text>
</comment>
<comment type="similarity">
    <text evidence="1">Belongs to the GpsB family.</text>
</comment>
<sequence length="114" mass="13151">MSDVSLKLSAKDIYEKDFEKTMARGYRREEVDAFLDDIIADYQKMADMNNEVVKLSEENHKLKKELEELRLRVATSRPQDNKSFSSNNTTTNTSSNNVDILKRISNLEKAVFGK</sequence>
<dbReference type="EMBL" id="CP000253">
    <property type="protein sequence ID" value="ABD30547.1"/>
    <property type="molecule type" value="Genomic_DNA"/>
</dbReference>
<dbReference type="RefSeq" id="WP_001286320.1">
    <property type="nucleotide sequence ID" value="NZ_LS483365.1"/>
</dbReference>
<dbReference type="RefSeq" id="YP_499980.1">
    <property type="nucleotide sequence ID" value="NC_007795.1"/>
</dbReference>
<dbReference type="SMR" id="Q2FYI5"/>
<dbReference type="STRING" id="93061.SAOUHSC_01462"/>
<dbReference type="PaxDb" id="1280-SAXN108_1467"/>
<dbReference type="GeneID" id="3919904"/>
<dbReference type="GeneID" id="98345812"/>
<dbReference type="KEGG" id="sao:SAOUHSC_01462"/>
<dbReference type="PATRIC" id="fig|93061.5.peg.1331"/>
<dbReference type="eggNOG" id="COG3599">
    <property type="taxonomic scope" value="Bacteria"/>
</dbReference>
<dbReference type="HOGENOM" id="CLU_140309_1_0_9"/>
<dbReference type="OrthoDB" id="389699at2"/>
<dbReference type="PRO" id="PR:Q2FYI5"/>
<dbReference type="Proteomes" id="UP000008816">
    <property type="component" value="Chromosome"/>
</dbReference>
<dbReference type="GO" id="GO:0005737">
    <property type="term" value="C:cytoplasm"/>
    <property type="evidence" value="ECO:0007669"/>
    <property type="project" value="UniProtKB-SubCell"/>
</dbReference>
<dbReference type="GO" id="GO:0051301">
    <property type="term" value="P:cell division"/>
    <property type="evidence" value="ECO:0007669"/>
    <property type="project" value="UniProtKB-UniRule"/>
</dbReference>
<dbReference type="GO" id="GO:0009273">
    <property type="term" value="P:peptidoglycan-based cell wall biogenesis"/>
    <property type="evidence" value="ECO:0000318"/>
    <property type="project" value="GO_Central"/>
</dbReference>
<dbReference type="GO" id="GO:0008360">
    <property type="term" value="P:regulation of cell shape"/>
    <property type="evidence" value="ECO:0007669"/>
    <property type="project" value="UniProtKB-UniRule"/>
</dbReference>
<dbReference type="Gene3D" id="6.10.250.660">
    <property type="match status" value="1"/>
</dbReference>
<dbReference type="HAMAP" id="MF_02011">
    <property type="entry name" value="GpsB"/>
    <property type="match status" value="1"/>
</dbReference>
<dbReference type="InterPro" id="IPR011229">
    <property type="entry name" value="Cell_cycle_GpsB"/>
</dbReference>
<dbReference type="InterPro" id="IPR019933">
    <property type="entry name" value="DivIVA_domain"/>
</dbReference>
<dbReference type="InterPro" id="IPR007793">
    <property type="entry name" value="DivIVA_fam"/>
</dbReference>
<dbReference type="NCBIfam" id="TIGR03544">
    <property type="entry name" value="DivI1A_domain"/>
    <property type="match status" value="1"/>
</dbReference>
<dbReference type="NCBIfam" id="NF010725">
    <property type="entry name" value="PRK14127.1"/>
    <property type="match status" value="1"/>
</dbReference>
<dbReference type="PANTHER" id="PTHR35794:SF1">
    <property type="entry name" value="CELL CYCLE PROTEIN GPSB"/>
    <property type="match status" value="1"/>
</dbReference>
<dbReference type="PANTHER" id="PTHR35794">
    <property type="entry name" value="CELL DIVISION PROTEIN DIVIVA"/>
    <property type="match status" value="1"/>
</dbReference>
<dbReference type="Pfam" id="PF05103">
    <property type="entry name" value="DivIVA"/>
    <property type="match status" value="1"/>
</dbReference>
<dbReference type="PIRSF" id="PIRSF029938">
    <property type="entry name" value="UCP029938"/>
    <property type="match status" value="1"/>
</dbReference>
<evidence type="ECO:0000255" key="1">
    <source>
        <dbReference type="HAMAP-Rule" id="MF_02011"/>
    </source>
</evidence>
<evidence type="ECO:0000256" key="2">
    <source>
        <dbReference type="SAM" id="MobiDB-lite"/>
    </source>
</evidence>
<protein>
    <recommendedName>
        <fullName evidence="1">Cell cycle protein GpsB</fullName>
    </recommendedName>
    <alternativeName>
        <fullName evidence="1">Guiding PBP1-shuttling protein</fullName>
    </alternativeName>
</protein>
<proteinExistence type="inferred from homology"/>
<organism>
    <name type="scientific">Staphylococcus aureus (strain NCTC 8325 / PS 47)</name>
    <dbReference type="NCBI Taxonomy" id="93061"/>
    <lineage>
        <taxon>Bacteria</taxon>
        <taxon>Bacillati</taxon>
        <taxon>Bacillota</taxon>
        <taxon>Bacilli</taxon>
        <taxon>Bacillales</taxon>
        <taxon>Staphylococcaceae</taxon>
        <taxon>Staphylococcus</taxon>
    </lineage>
</organism>
<reference key="1">
    <citation type="book" date="2006" name="Gram positive pathogens, 2nd edition">
        <title>The Staphylococcus aureus NCTC 8325 genome.</title>
        <editorList>
            <person name="Fischetti V."/>
            <person name="Novick R."/>
            <person name="Ferretti J."/>
            <person name="Portnoy D."/>
            <person name="Rood J."/>
        </editorList>
        <authorList>
            <person name="Gillaspy A.F."/>
            <person name="Worrell V."/>
            <person name="Orvis J."/>
            <person name="Roe B.A."/>
            <person name="Dyer D.W."/>
            <person name="Iandolo J.J."/>
        </authorList>
    </citation>
    <scope>NUCLEOTIDE SEQUENCE [LARGE SCALE GENOMIC DNA]</scope>
    <source>
        <strain>NCTC 8325 / PS 47</strain>
    </source>
</reference>
<keyword id="KW-0131">Cell cycle</keyword>
<keyword id="KW-0132">Cell division</keyword>
<keyword id="KW-0133">Cell shape</keyword>
<keyword id="KW-0175">Coiled coil</keyword>
<keyword id="KW-0963">Cytoplasm</keyword>
<keyword id="KW-1185">Reference proteome</keyword>
<feature type="chain" id="PRO_0000337941" description="Cell cycle protein GpsB">
    <location>
        <begin position="1"/>
        <end position="114"/>
    </location>
</feature>
<feature type="region of interest" description="Disordered" evidence="2">
    <location>
        <begin position="74"/>
        <end position="99"/>
    </location>
</feature>
<feature type="coiled-coil region" evidence="1">
    <location>
        <begin position="42"/>
        <end position="77"/>
    </location>
</feature>
<feature type="compositionally biased region" description="Low complexity" evidence="2">
    <location>
        <begin position="85"/>
        <end position="97"/>
    </location>
</feature>
<gene>
    <name evidence="1" type="primary">gpsB</name>
    <name type="ordered locus">SAOUHSC_01462</name>
</gene>
<name>GPSB_STAA8</name>